<evidence type="ECO:0000255" key="1">
    <source>
        <dbReference type="HAMAP-Rule" id="MF_00013"/>
    </source>
</evidence>
<evidence type="ECO:0000255" key="2">
    <source>
        <dbReference type="PROSITE-ProRule" id="PRU01067"/>
    </source>
</evidence>
<accession>Q8R9E0</accession>
<organism>
    <name type="scientific">Caldanaerobacter subterraneus subsp. tengcongensis (strain DSM 15242 / JCM 11007 / NBRC 100824 / MB4)</name>
    <name type="common">Thermoanaerobacter tengcongensis</name>
    <dbReference type="NCBI Taxonomy" id="273068"/>
    <lineage>
        <taxon>Bacteria</taxon>
        <taxon>Bacillati</taxon>
        <taxon>Bacillota</taxon>
        <taxon>Clostridia</taxon>
        <taxon>Thermoanaerobacterales</taxon>
        <taxon>Thermoanaerobacteraceae</taxon>
        <taxon>Caldanaerobacter</taxon>
    </lineage>
</organism>
<keyword id="KW-0012">Acyltransferase</keyword>
<keyword id="KW-0963">Cytoplasm</keyword>
<keyword id="KW-1185">Reference proteome</keyword>
<keyword id="KW-0808">Transferase</keyword>
<dbReference type="EC" id="2.3.1.181" evidence="1"/>
<dbReference type="EMBL" id="AE008691">
    <property type="protein sequence ID" value="AAM24874.1"/>
    <property type="molecule type" value="Genomic_DNA"/>
</dbReference>
<dbReference type="RefSeq" id="WP_003868833.1">
    <property type="nucleotide sequence ID" value="NZ_JANUCV010000001.1"/>
</dbReference>
<dbReference type="SMR" id="Q8R9E0"/>
<dbReference type="STRING" id="273068.TTE1673"/>
<dbReference type="KEGG" id="tte:TTE1673"/>
<dbReference type="eggNOG" id="COG0321">
    <property type="taxonomic scope" value="Bacteria"/>
</dbReference>
<dbReference type="HOGENOM" id="CLU_035168_1_3_9"/>
<dbReference type="OrthoDB" id="9787061at2"/>
<dbReference type="UniPathway" id="UPA00538">
    <property type="reaction ID" value="UER00592"/>
</dbReference>
<dbReference type="Proteomes" id="UP000000555">
    <property type="component" value="Chromosome"/>
</dbReference>
<dbReference type="GO" id="GO:0005737">
    <property type="term" value="C:cytoplasm"/>
    <property type="evidence" value="ECO:0007669"/>
    <property type="project" value="UniProtKB-SubCell"/>
</dbReference>
<dbReference type="GO" id="GO:0033819">
    <property type="term" value="F:lipoyl(octanoyl) transferase activity"/>
    <property type="evidence" value="ECO:0007669"/>
    <property type="project" value="UniProtKB-EC"/>
</dbReference>
<dbReference type="GO" id="GO:0036211">
    <property type="term" value="P:protein modification process"/>
    <property type="evidence" value="ECO:0007669"/>
    <property type="project" value="InterPro"/>
</dbReference>
<dbReference type="CDD" id="cd16444">
    <property type="entry name" value="LipB"/>
    <property type="match status" value="1"/>
</dbReference>
<dbReference type="Gene3D" id="3.30.930.10">
    <property type="entry name" value="Bira Bifunctional Protein, Domain 2"/>
    <property type="match status" value="1"/>
</dbReference>
<dbReference type="HAMAP" id="MF_00013">
    <property type="entry name" value="LipB"/>
    <property type="match status" value="1"/>
</dbReference>
<dbReference type="InterPro" id="IPR045864">
    <property type="entry name" value="aa-tRNA-synth_II/BPL/LPL"/>
</dbReference>
<dbReference type="InterPro" id="IPR004143">
    <property type="entry name" value="BPL_LPL_catalytic"/>
</dbReference>
<dbReference type="InterPro" id="IPR000544">
    <property type="entry name" value="Octanoyltransferase"/>
</dbReference>
<dbReference type="InterPro" id="IPR020605">
    <property type="entry name" value="Octanoyltransferase_CS"/>
</dbReference>
<dbReference type="NCBIfam" id="TIGR00214">
    <property type="entry name" value="lipB"/>
    <property type="match status" value="1"/>
</dbReference>
<dbReference type="NCBIfam" id="NF010925">
    <property type="entry name" value="PRK14345.1"/>
    <property type="match status" value="1"/>
</dbReference>
<dbReference type="PANTHER" id="PTHR10993:SF7">
    <property type="entry name" value="LIPOYLTRANSFERASE 2, MITOCHONDRIAL-RELATED"/>
    <property type="match status" value="1"/>
</dbReference>
<dbReference type="PANTHER" id="PTHR10993">
    <property type="entry name" value="OCTANOYLTRANSFERASE"/>
    <property type="match status" value="1"/>
</dbReference>
<dbReference type="Pfam" id="PF21948">
    <property type="entry name" value="LplA-B_cat"/>
    <property type="match status" value="1"/>
</dbReference>
<dbReference type="PIRSF" id="PIRSF016262">
    <property type="entry name" value="LPLase"/>
    <property type="match status" value="1"/>
</dbReference>
<dbReference type="SUPFAM" id="SSF55681">
    <property type="entry name" value="Class II aaRS and biotin synthetases"/>
    <property type="match status" value="1"/>
</dbReference>
<dbReference type="PROSITE" id="PS51733">
    <property type="entry name" value="BPL_LPL_CATALYTIC"/>
    <property type="match status" value="1"/>
</dbReference>
<dbReference type="PROSITE" id="PS01313">
    <property type="entry name" value="LIPB"/>
    <property type="match status" value="1"/>
</dbReference>
<reference key="1">
    <citation type="journal article" date="2002" name="Genome Res.">
        <title>A complete sequence of the T. tengcongensis genome.</title>
        <authorList>
            <person name="Bao Q."/>
            <person name="Tian Y."/>
            <person name="Li W."/>
            <person name="Xu Z."/>
            <person name="Xuan Z."/>
            <person name="Hu S."/>
            <person name="Dong W."/>
            <person name="Yang J."/>
            <person name="Chen Y."/>
            <person name="Xue Y."/>
            <person name="Xu Y."/>
            <person name="Lai X."/>
            <person name="Huang L."/>
            <person name="Dong X."/>
            <person name="Ma Y."/>
            <person name="Ling L."/>
            <person name="Tan H."/>
            <person name="Chen R."/>
            <person name="Wang J."/>
            <person name="Yu J."/>
            <person name="Yang H."/>
        </authorList>
    </citation>
    <scope>NUCLEOTIDE SEQUENCE [LARGE SCALE GENOMIC DNA]</scope>
    <source>
        <strain>DSM 15242 / JCM 11007 / NBRC 100824 / MB4</strain>
    </source>
</reference>
<comment type="function">
    <text evidence="1">Catalyzes the transfer of endogenously produced octanoic acid from octanoyl-acyl-carrier-protein onto the lipoyl domains of lipoate-dependent enzymes. Lipoyl-ACP can also act as a substrate although octanoyl-ACP is likely to be the physiological substrate.</text>
</comment>
<comment type="catalytic activity">
    <reaction evidence="1">
        <text>octanoyl-[ACP] + L-lysyl-[protein] = N(6)-octanoyl-L-lysyl-[protein] + holo-[ACP] + H(+)</text>
        <dbReference type="Rhea" id="RHEA:17665"/>
        <dbReference type="Rhea" id="RHEA-COMP:9636"/>
        <dbReference type="Rhea" id="RHEA-COMP:9685"/>
        <dbReference type="Rhea" id="RHEA-COMP:9752"/>
        <dbReference type="Rhea" id="RHEA-COMP:9928"/>
        <dbReference type="ChEBI" id="CHEBI:15378"/>
        <dbReference type="ChEBI" id="CHEBI:29969"/>
        <dbReference type="ChEBI" id="CHEBI:64479"/>
        <dbReference type="ChEBI" id="CHEBI:78463"/>
        <dbReference type="ChEBI" id="CHEBI:78809"/>
        <dbReference type="EC" id="2.3.1.181"/>
    </reaction>
</comment>
<comment type="pathway">
    <text evidence="1">Protein modification; protein lipoylation via endogenous pathway; protein N(6)-(lipoyl)lysine from octanoyl-[acyl-carrier-protein]: step 1/2.</text>
</comment>
<comment type="subcellular location">
    <subcellularLocation>
        <location evidence="1">Cytoplasm</location>
    </subcellularLocation>
</comment>
<comment type="miscellaneous">
    <text evidence="1">In the reaction, the free carboxyl group of octanoic acid is attached via an amide linkage to the epsilon-amino group of a specific lysine residue of lipoyl domains of lipoate-dependent enzymes.</text>
</comment>
<comment type="similarity">
    <text evidence="1">Belongs to the LipB family.</text>
</comment>
<sequence>MRRGEVLKLGVVPYLEGKEIQLKAFEKVKKEETDGILILLQHKPVYTIGVSGGYDEDILVPIDYIKEKAELYKVERGGKITFHGPGQVVAYPIFNLAKWQKDVHLFVHNLEEAVIRLLREYGIIAGRKEKYTGVWVGDEKICAIGIAVKRWITWHGIALNVNTDLSYFGLINACGITEFGVTSMKKLGIEVEIEEVMDRLVDKFEEVFEIKFEEIDLTRLAVVDSAKA</sequence>
<name>LIPB_CALS4</name>
<protein>
    <recommendedName>
        <fullName evidence="1">Octanoyltransferase</fullName>
        <ecNumber evidence="1">2.3.1.181</ecNumber>
    </recommendedName>
    <alternativeName>
        <fullName evidence="1">Lipoate-protein ligase B</fullName>
    </alternativeName>
    <alternativeName>
        <fullName evidence="1">Lipoyl/octanoyl transferase</fullName>
    </alternativeName>
    <alternativeName>
        <fullName evidence="1">Octanoyl-[acyl-carrier-protein]-protein N-octanoyltransferase</fullName>
    </alternativeName>
</protein>
<proteinExistence type="inferred from homology"/>
<feature type="chain" id="PRO_0000062886" description="Octanoyltransferase">
    <location>
        <begin position="1"/>
        <end position="228"/>
    </location>
</feature>
<feature type="domain" description="BPL/LPL catalytic" evidence="2">
    <location>
        <begin position="31"/>
        <end position="212"/>
    </location>
</feature>
<feature type="active site" description="Acyl-thioester intermediate" evidence="1">
    <location>
        <position position="174"/>
    </location>
</feature>
<feature type="binding site" evidence="1">
    <location>
        <begin position="76"/>
        <end position="83"/>
    </location>
    <ligand>
        <name>substrate</name>
    </ligand>
</feature>
<feature type="binding site" evidence="1">
    <location>
        <begin position="143"/>
        <end position="145"/>
    </location>
    <ligand>
        <name>substrate</name>
    </ligand>
</feature>
<feature type="binding site" evidence="1">
    <location>
        <begin position="156"/>
        <end position="158"/>
    </location>
    <ligand>
        <name>substrate</name>
    </ligand>
</feature>
<feature type="site" description="Lowers pKa of active site Cys" evidence="1">
    <location>
        <position position="140"/>
    </location>
</feature>
<gene>
    <name evidence="1" type="primary">lipB</name>
    <name type="ordered locus">TTE1673</name>
</gene>